<feature type="signal peptide" evidence="2">
    <location>
        <begin position="1"/>
        <end position="19"/>
    </location>
</feature>
<feature type="propeptide" id="PRO_0000033924" evidence="2">
    <location>
        <begin position="20"/>
        <end position="315"/>
    </location>
</feature>
<feature type="chain" id="PRO_0000033925" description="Growth/differentiation factor 7">
    <location>
        <begin position="316"/>
        <end position="461"/>
    </location>
</feature>
<feature type="region of interest" description="Disordered" evidence="3">
    <location>
        <begin position="287"/>
        <end position="360"/>
    </location>
</feature>
<feature type="compositionally biased region" description="Gly residues" evidence="3">
    <location>
        <begin position="323"/>
        <end position="350"/>
    </location>
</feature>
<feature type="compositionally biased region" description="Basic residues" evidence="3">
    <location>
        <begin position="351"/>
        <end position="360"/>
    </location>
</feature>
<feature type="glycosylation site" description="N-linked (GlcNAc...) asparagine" evidence="2">
    <location>
        <position position="79"/>
    </location>
</feature>
<feature type="disulfide bond" evidence="1">
    <location>
        <begin position="360"/>
        <end position="426"/>
    </location>
</feature>
<feature type="disulfide bond" evidence="1">
    <location>
        <begin position="389"/>
        <end position="458"/>
    </location>
</feature>
<feature type="disulfide bond" evidence="1">
    <location>
        <begin position="393"/>
        <end position="460"/>
    </location>
</feature>
<feature type="disulfide bond" description="Interchain" evidence="1">
    <location>
        <position position="425"/>
    </location>
</feature>
<feature type="splice variant" id="VSP_010764" description="In isoform 2." evidence="4">
    <location>
        <begin position="123"/>
        <end position="130"/>
    </location>
</feature>
<reference key="1">
    <citation type="submission" date="2002-06" db="EMBL/GenBank/DDBJ databases">
        <authorList>
            <person name="Guo J.H."/>
            <person name="Yu L."/>
        </authorList>
    </citation>
    <scope>NUCLEOTIDE SEQUENCE [LARGE SCALE MRNA] (ISOFORM 2)</scope>
    <source>
        <strain>BALB/cJ</strain>
        <tissue>Testis</tissue>
    </source>
</reference>
<reference key="2">
    <citation type="journal article" date="2001" name="J. Neurochem.">
        <title>Growth/differentiation factor 7 is preferentially expressed in the primary motor area of the monkey neocortex.</title>
        <authorList>
            <person name="Watakabe A."/>
            <person name="Fujita H."/>
            <person name="Hayashi M."/>
            <person name="Yamamori T."/>
        </authorList>
    </citation>
    <scope>NUCLEOTIDE SEQUENCE [GENOMIC DNA] OF 1-441 (ISOFORM 1)</scope>
    <source>
        <strain>TT2</strain>
    </source>
</reference>
<reference key="3">
    <citation type="journal article" date="1994" name="Nature">
        <title>Limb alterations in brachypodism mice due to mutations in a new member of the TGF beta-superfamily.</title>
        <authorList>
            <person name="Storm E.E."/>
            <person name="Huynh T.V."/>
            <person name="Copeland N.G."/>
            <person name="Jenkins N.A."/>
            <person name="Kingsley D.M."/>
            <person name="Lee S.-J."/>
        </authorList>
    </citation>
    <scope>NUCLEOTIDE SEQUENCE OF 311-461</scope>
    <source>
        <strain>BALB/cJ</strain>
        <tissue>Liver</tissue>
    </source>
</reference>
<gene>
    <name type="primary">Gdf7</name>
    <name type="synonym">Gdf-7</name>
</gene>
<accession>P43029</accession>
<accession>Q7TNX4</accession>
<accession>Q99MY1</accession>
<name>GDF7_MOUSE</name>
<protein>
    <recommendedName>
        <fullName>Growth/differentiation factor 7</fullName>
        <shortName>GDF-7</shortName>
    </recommendedName>
</protein>
<organism>
    <name type="scientific">Mus musculus</name>
    <name type="common">Mouse</name>
    <dbReference type="NCBI Taxonomy" id="10090"/>
    <lineage>
        <taxon>Eukaryota</taxon>
        <taxon>Metazoa</taxon>
        <taxon>Chordata</taxon>
        <taxon>Craniata</taxon>
        <taxon>Vertebrata</taxon>
        <taxon>Euteleostomi</taxon>
        <taxon>Mammalia</taxon>
        <taxon>Eutheria</taxon>
        <taxon>Euarchontoglires</taxon>
        <taxon>Glires</taxon>
        <taxon>Rodentia</taxon>
        <taxon>Myomorpha</taxon>
        <taxon>Muroidea</taxon>
        <taxon>Muridae</taxon>
        <taxon>Murinae</taxon>
        <taxon>Mus</taxon>
        <taxon>Mus</taxon>
    </lineage>
</organism>
<evidence type="ECO:0000250" key="1"/>
<evidence type="ECO:0000255" key="2"/>
<evidence type="ECO:0000256" key="3">
    <source>
        <dbReference type="SAM" id="MobiDB-lite"/>
    </source>
</evidence>
<evidence type="ECO:0000303" key="4">
    <source ref="1"/>
</evidence>
<evidence type="ECO:0000305" key="5"/>
<sequence>MDLSAAAALCLWLLSACRPRDGLEAAAVLRAAGAGPAWSPGGGGGGRTLARAPGPSALQAAAVPGPRAVRRAAGSGFRNGSVVPHHFMMSLYRSLAGRAPVAAASGHGRVDTITGFTDQATQDETAAAEPGQSFLFDVSSLSEADEVVNAELRVLRRRSPEPDRDSATLLPRLLLSTCPDEAGTAHLLHSRAAEPLGGARWEAFDVTDAVQSHRRWPRASRKFCLVLRAVTASESSPLALRRLGFGWPGGGDGGGTAAEERALLVISSRTQRKESLFREIRAQARALRAAAEPPPDPGPGAGSRKANLGGRRRRRTALAGTRGAQGSGGGGGGGGGGGGGGGGGGGGAGRGHGRRGRSRCSRKSLHVDFKELGWDDWIIAPLDYEAYHCEGVCDFPLRSHLEPTNHAIIQTLLNSMAPDAAPASCCVPARLSPISILYIDAANNVVYKQYEDMVVEACGCR</sequence>
<proteinExistence type="evidence at transcript level"/>
<keyword id="KW-0025">Alternative splicing</keyword>
<keyword id="KW-0165">Cleavage on pair of basic residues</keyword>
<keyword id="KW-0202">Cytokine</keyword>
<keyword id="KW-1015">Disulfide bond</keyword>
<keyword id="KW-0325">Glycoprotein</keyword>
<keyword id="KW-0339">Growth factor</keyword>
<keyword id="KW-1185">Reference proteome</keyword>
<keyword id="KW-0964">Secreted</keyword>
<keyword id="KW-0732">Signal</keyword>
<comment type="subunit">
    <text evidence="1">Homodimer; disulfide-linked.</text>
</comment>
<comment type="subcellular location">
    <subcellularLocation>
        <location evidence="1">Secreted</location>
    </subcellularLocation>
</comment>
<comment type="alternative products">
    <event type="alternative splicing"/>
    <isoform>
        <id>P43029-1</id>
        <name>1</name>
        <sequence type="displayed"/>
    </isoform>
    <isoform>
        <id>P43029-2</id>
        <name>2</name>
        <sequence type="described" ref="VSP_010764"/>
    </isoform>
</comment>
<comment type="similarity">
    <text evidence="5">Belongs to the TGF-beta family.</text>
</comment>
<dbReference type="EMBL" id="AF525752">
    <property type="protein sequence ID" value="AAP97721.1"/>
    <property type="molecule type" value="mRNA"/>
</dbReference>
<dbReference type="EMBL" id="AH010605">
    <property type="protein sequence ID" value="AAK30843.1"/>
    <property type="molecule type" value="Genomic_DNA"/>
</dbReference>
<dbReference type="EMBL" id="U08339">
    <property type="protein sequence ID" value="AAA18780.1"/>
    <property type="molecule type" value="Unassigned_DNA"/>
</dbReference>
<dbReference type="CCDS" id="CCDS83954.1">
    <molecule id="P43029-1"/>
</dbReference>
<dbReference type="CCDS" id="CCDS88308.1">
    <molecule id="P43029-2"/>
</dbReference>
<dbReference type="PIR" id="S43296">
    <property type="entry name" value="S43296"/>
</dbReference>
<dbReference type="RefSeq" id="NP_001299805.1">
    <molecule id="P43029-1"/>
    <property type="nucleotide sequence ID" value="NM_001312876.1"/>
</dbReference>
<dbReference type="RefSeq" id="NP_038555.1">
    <molecule id="P43029-2"/>
    <property type="nucleotide sequence ID" value="NM_013527.1"/>
</dbReference>
<dbReference type="BioGRID" id="231945">
    <property type="interactions" value="1"/>
</dbReference>
<dbReference type="FunCoup" id="P43029">
    <property type="interactions" value="709"/>
</dbReference>
<dbReference type="IntAct" id="P43029">
    <property type="interactions" value="1"/>
</dbReference>
<dbReference type="STRING" id="10090.ENSMUSP00000038301"/>
<dbReference type="GlyCosmos" id="P43029">
    <property type="glycosylation" value="1 site, No reported glycans"/>
</dbReference>
<dbReference type="GlyGen" id="P43029">
    <property type="glycosylation" value="1 site"/>
</dbReference>
<dbReference type="PhosphoSitePlus" id="P43029"/>
<dbReference type="PaxDb" id="10090-ENSMUSP00000038301"/>
<dbReference type="PeptideAtlas" id="P43029"/>
<dbReference type="ProteomicsDB" id="273040">
    <molecule id="P43029-1"/>
</dbReference>
<dbReference type="ProteomicsDB" id="273041">
    <molecule id="P43029-2"/>
</dbReference>
<dbReference type="Antibodypedia" id="27314">
    <property type="antibodies" value="273 antibodies from 29 providers"/>
</dbReference>
<dbReference type="DNASU" id="238057"/>
<dbReference type="Ensembl" id="ENSMUST00000037313.6">
    <molecule id="P43029-1"/>
    <property type="protein sequence ID" value="ENSMUSP00000038301.5"/>
    <property type="gene ID" value="ENSMUSG00000037660.6"/>
</dbReference>
<dbReference type="Ensembl" id="ENSMUST00000220073.2">
    <molecule id="P43029-2"/>
    <property type="protein sequence ID" value="ENSMUSP00000151234.2"/>
    <property type="gene ID" value="ENSMUSG00000037660.6"/>
</dbReference>
<dbReference type="GeneID" id="238057"/>
<dbReference type="KEGG" id="mmu:238057"/>
<dbReference type="UCSC" id="uc007mzl.1">
    <molecule id="P43029-2"/>
    <property type="organism name" value="mouse"/>
</dbReference>
<dbReference type="AGR" id="MGI:95690"/>
<dbReference type="CTD" id="151449"/>
<dbReference type="MGI" id="MGI:95690">
    <property type="gene designation" value="Gdf7"/>
</dbReference>
<dbReference type="VEuPathDB" id="HostDB:ENSMUSG00000037660"/>
<dbReference type="eggNOG" id="KOG3900">
    <property type="taxonomic scope" value="Eukaryota"/>
</dbReference>
<dbReference type="GeneTree" id="ENSGT00940000160140"/>
<dbReference type="HOGENOM" id="CLU_020515_0_1_1"/>
<dbReference type="InParanoid" id="P43029"/>
<dbReference type="OMA" id="GARWEVF"/>
<dbReference type="OrthoDB" id="5987191at2759"/>
<dbReference type="PhylomeDB" id="P43029"/>
<dbReference type="TreeFam" id="TF316134"/>
<dbReference type="BioGRID-ORCS" id="238057">
    <property type="hits" value="1 hit in 70 CRISPR screens"/>
</dbReference>
<dbReference type="PRO" id="PR:P43029"/>
<dbReference type="Proteomes" id="UP000000589">
    <property type="component" value="Chromosome 12"/>
</dbReference>
<dbReference type="RNAct" id="P43029">
    <property type="molecule type" value="protein"/>
</dbReference>
<dbReference type="Bgee" id="ENSMUSG00000037660">
    <property type="expression patterns" value="Expressed in uterus and 19 other cell types or tissues"/>
</dbReference>
<dbReference type="GO" id="GO:0005576">
    <property type="term" value="C:extracellular region"/>
    <property type="evidence" value="ECO:0000314"/>
    <property type="project" value="MGI"/>
</dbReference>
<dbReference type="GO" id="GO:0005615">
    <property type="term" value="C:extracellular space"/>
    <property type="evidence" value="ECO:0007669"/>
    <property type="project" value="UniProtKB-KW"/>
</dbReference>
<dbReference type="GO" id="GO:0005125">
    <property type="term" value="F:cytokine activity"/>
    <property type="evidence" value="ECO:0007669"/>
    <property type="project" value="UniProtKB-KW"/>
</dbReference>
<dbReference type="GO" id="GO:0008083">
    <property type="term" value="F:growth factor activity"/>
    <property type="evidence" value="ECO:0007669"/>
    <property type="project" value="UniProtKB-KW"/>
</dbReference>
<dbReference type="GO" id="GO:0042802">
    <property type="term" value="F:identical protein binding"/>
    <property type="evidence" value="ECO:0000353"/>
    <property type="project" value="MGI"/>
</dbReference>
<dbReference type="GO" id="GO:0032924">
    <property type="term" value="P:activin receptor signaling pathway"/>
    <property type="evidence" value="ECO:0007669"/>
    <property type="project" value="Ensembl"/>
</dbReference>
<dbReference type="GO" id="GO:0007411">
    <property type="term" value="P:axon guidance"/>
    <property type="evidence" value="ECO:0000314"/>
    <property type="project" value="MGI"/>
</dbReference>
<dbReference type="GO" id="GO:0030509">
    <property type="term" value="P:BMP signaling pathway"/>
    <property type="evidence" value="ECO:0000314"/>
    <property type="project" value="MGI"/>
</dbReference>
<dbReference type="GO" id="GO:0048754">
    <property type="term" value="P:branching morphogenesis of an epithelial tube"/>
    <property type="evidence" value="ECO:0000315"/>
    <property type="project" value="MGI"/>
</dbReference>
<dbReference type="GO" id="GO:0045165">
    <property type="term" value="P:cell fate commitment"/>
    <property type="evidence" value="ECO:0000314"/>
    <property type="project" value="MGI"/>
</dbReference>
<dbReference type="GO" id="GO:0030855">
    <property type="term" value="P:epithelial cell differentiation"/>
    <property type="evidence" value="ECO:0000315"/>
    <property type="project" value="MGI"/>
</dbReference>
<dbReference type="GO" id="GO:0048853">
    <property type="term" value="P:forebrain morphogenesis"/>
    <property type="evidence" value="ECO:0000315"/>
    <property type="project" value="MGI"/>
</dbReference>
<dbReference type="GO" id="GO:0022612">
    <property type="term" value="P:gland morphogenesis"/>
    <property type="evidence" value="ECO:0000315"/>
    <property type="project" value="MGI"/>
</dbReference>
<dbReference type="GO" id="GO:0030901">
    <property type="term" value="P:midbrain development"/>
    <property type="evidence" value="ECO:0000315"/>
    <property type="project" value="MGI"/>
</dbReference>
<dbReference type="GO" id="GO:0060571">
    <property type="term" value="P:morphogenesis of an epithelial fold"/>
    <property type="evidence" value="ECO:0000315"/>
    <property type="project" value="MGI"/>
</dbReference>
<dbReference type="GO" id="GO:0021915">
    <property type="term" value="P:neural tube development"/>
    <property type="evidence" value="ECO:0000315"/>
    <property type="project" value="MGI"/>
</dbReference>
<dbReference type="GO" id="GO:0045893">
    <property type="term" value="P:positive regulation of DNA-templated transcription"/>
    <property type="evidence" value="ECO:0007669"/>
    <property type="project" value="Ensembl"/>
</dbReference>
<dbReference type="GO" id="GO:0010628">
    <property type="term" value="P:positive regulation of gene expression"/>
    <property type="evidence" value="ECO:0000314"/>
    <property type="project" value="UniProtKB"/>
</dbReference>
<dbReference type="GO" id="GO:0045666">
    <property type="term" value="P:positive regulation of neuron differentiation"/>
    <property type="evidence" value="ECO:0000314"/>
    <property type="project" value="MGI"/>
</dbReference>
<dbReference type="GO" id="GO:0060391">
    <property type="term" value="P:positive regulation of SMAD protein signal transduction"/>
    <property type="evidence" value="ECO:0007669"/>
    <property type="project" value="Ensembl"/>
</dbReference>
<dbReference type="GO" id="GO:2001051">
    <property type="term" value="P:positive regulation of tendon cell differentiation"/>
    <property type="evidence" value="ECO:0000314"/>
    <property type="project" value="UniProtKB"/>
</dbReference>
<dbReference type="GO" id="GO:0048608">
    <property type="term" value="P:reproductive structure development"/>
    <property type="evidence" value="ECO:0000315"/>
    <property type="project" value="MGI"/>
</dbReference>
<dbReference type="GO" id="GO:0021509">
    <property type="term" value="P:roof plate formation"/>
    <property type="evidence" value="ECO:0000315"/>
    <property type="project" value="MGI"/>
</dbReference>
<dbReference type="GO" id="GO:0021527">
    <property type="term" value="P:spinal cord association neuron differentiation"/>
    <property type="evidence" value="ECO:0000315"/>
    <property type="project" value="MGI"/>
</dbReference>
<dbReference type="CDD" id="cd13766">
    <property type="entry name" value="TGF_beta_GDF5_6_7"/>
    <property type="match status" value="1"/>
</dbReference>
<dbReference type="FunFam" id="2.10.90.10:FF:000001">
    <property type="entry name" value="Bone morphogenetic protein 4"/>
    <property type="match status" value="1"/>
</dbReference>
<dbReference type="FunFam" id="2.60.120.970:FF:000051">
    <property type="entry name" value="Growth differentiation factor 7"/>
    <property type="match status" value="1"/>
</dbReference>
<dbReference type="Gene3D" id="2.60.120.970">
    <property type="match status" value="1"/>
</dbReference>
<dbReference type="Gene3D" id="2.10.90.10">
    <property type="entry name" value="Cystine-knot cytokines"/>
    <property type="match status" value="1"/>
</dbReference>
<dbReference type="InterPro" id="IPR029034">
    <property type="entry name" value="Cystine-knot_cytokine"/>
</dbReference>
<dbReference type="InterPro" id="IPR001839">
    <property type="entry name" value="TGF-b_C"/>
</dbReference>
<dbReference type="InterPro" id="IPR001111">
    <property type="entry name" value="TGF-b_propeptide"/>
</dbReference>
<dbReference type="InterPro" id="IPR015615">
    <property type="entry name" value="TGF-beta-rel"/>
</dbReference>
<dbReference type="InterPro" id="IPR017948">
    <property type="entry name" value="TGFb_CS"/>
</dbReference>
<dbReference type="PANTHER" id="PTHR11848:SF160">
    <property type="entry name" value="GROWTH_DIFFERENTIATION FACTOR 7"/>
    <property type="match status" value="1"/>
</dbReference>
<dbReference type="PANTHER" id="PTHR11848">
    <property type="entry name" value="TGF-BETA FAMILY"/>
    <property type="match status" value="1"/>
</dbReference>
<dbReference type="Pfam" id="PF00019">
    <property type="entry name" value="TGF_beta"/>
    <property type="match status" value="1"/>
</dbReference>
<dbReference type="Pfam" id="PF00688">
    <property type="entry name" value="TGFb_propeptide"/>
    <property type="match status" value="1"/>
</dbReference>
<dbReference type="PRINTS" id="PR00669">
    <property type="entry name" value="INHIBINA"/>
</dbReference>
<dbReference type="SMART" id="SM00204">
    <property type="entry name" value="TGFB"/>
    <property type="match status" value="1"/>
</dbReference>
<dbReference type="SUPFAM" id="SSF57501">
    <property type="entry name" value="Cystine-knot cytokines"/>
    <property type="match status" value="1"/>
</dbReference>
<dbReference type="PROSITE" id="PS00250">
    <property type="entry name" value="TGF_BETA_1"/>
    <property type="match status" value="1"/>
</dbReference>
<dbReference type="PROSITE" id="PS51362">
    <property type="entry name" value="TGF_BETA_2"/>
    <property type="match status" value="1"/>
</dbReference>